<protein>
    <recommendedName>
        <fullName>Phosphatidylglycerol lysyltransferase</fullName>
        <ecNumber>2.3.2.3</ecNumber>
    </recommendedName>
    <alternativeName>
        <fullName>Lysylphosphatidylglycerol synthase</fullName>
        <shortName>LPG synthase</shortName>
    </alternativeName>
    <alternativeName>
        <fullName>Multiple peptide resistance factor</fullName>
    </alternativeName>
</protein>
<keyword id="KW-0046">Antibiotic resistance</keyword>
<keyword id="KW-1003">Cell membrane</keyword>
<keyword id="KW-0443">Lipid metabolism</keyword>
<keyword id="KW-0472">Membrane</keyword>
<keyword id="KW-1185">Reference proteome</keyword>
<keyword id="KW-0808">Transferase</keyword>
<keyword id="KW-0812">Transmembrane</keyword>
<keyword id="KW-1133">Transmembrane helix</keyword>
<keyword id="KW-0843">Virulence</keyword>
<proteinExistence type="inferred from homology"/>
<dbReference type="EC" id="2.3.2.3"/>
<dbReference type="EMBL" id="CP000029">
    <property type="protein sequence ID" value="AAW54320.1"/>
    <property type="molecule type" value="Genomic_DNA"/>
</dbReference>
<dbReference type="RefSeq" id="WP_002456532.1">
    <property type="nucleotide sequence ID" value="NC_002976.3"/>
</dbReference>
<dbReference type="SMR" id="Q5HPI1"/>
<dbReference type="STRING" id="176279.SERP0930"/>
<dbReference type="KEGG" id="ser:SERP0930"/>
<dbReference type="eggNOG" id="COG0392">
    <property type="taxonomic scope" value="Bacteria"/>
</dbReference>
<dbReference type="eggNOG" id="COG2898">
    <property type="taxonomic scope" value="Bacteria"/>
</dbReference>
<dbReference type="HOGENOM" id="CLU_008255_7_1_9"/>
<dbReference type="Proteomes" id="UP000000531">
    <property type="component" value="Chromosome"/>
</dbReference>
<dbReference type="GO" id="GO:0005886">
    <property type="term" value="C:plasma membrane"/>
    <property type="evidence" value="ECO:0007669"/>
    <property type="project" value="UniProtKB-SubCell"/>
</dbReference>
<dbReference type="GO" id="GO:0050071">
    <property type="term" value="F:phosphatidylglycerol lysyltransferase activity"/>
    <property type="evidence" value="ECO:0007669"/>
    <property type="project" value="UniProtKB-EC"/>
</dbReference>
<dbReference type="GO" id="GO:0006629">
    <property type="term" value="P:lipid metabolic process"/>
    <property type="evidence" value="ECO:0007669"/>
    <property type="project" value="UniProtKB-KW"/>
</dbReference>
<dbReference type="GO" id="GO:0055091">
    <property type="term" value="P:phospholipid homeostasis"/>
    <property type="evidence" value="ECO:0007669"/>
    <property type="project" value="TreeGrafter"/>
</dbReference>
<dbReference type="GO" id="GO:0046677">
    <property type="term" value="P:response to antibiotic"/>
    <property type="evidence" value="ECO:0007669"/>
    <property type="project" value="UniProtKB-KW"/>
</dbReference>
<dbReference type="InterPro" id="IPR016181">
    <property type="entry name" value="Acyl_CoA_acyltransferase"/>
</dbReference>
<dbReference type="InterPro" id="IPR022791">
    <property type="entry name" value="L-PG_synthase/AglD"/>
</dbReference>
<dbReference type="InterPro" id="IPR024320">
    <property type="entry name" value="LPG_synthase_C"/>
</dbReference>
<dbReference type="InterPro" id="IPR051211">
    <property type="entry name" value="PG_lysyltransferase"/>
</dbReference>
<dbReference type="NCBIfam" id="NF033480">
    <property type="entry name" value="bifunc_MprF"/>
    <property type="match status" value="1"/>
</dbReference>
<dbReference type="PANTHER" id="PTHR34697">
    <property type="entry name" value="PHOSPHATIDYLGLYCEROL LYSYLTRANSFERASE"/>
    <property type="match status" value="1"/>
</dbReference>
<dbReference type="PANTHER" id="PTHR34697:SF2">
    <property type="entry name" value="PHOSPHATIDYLGLYCEROL LYSYLTRANSFERASE"/>
    <property type="match status" value="1"/>
</dbReference>
<dbReference type="Pfam" id="PF09924">
    <property type="entry name" value="LPG_synthase_C"/>
    <property type="match status" value="1"/>
</dbReference>
<dbReference type="Pfam" id="PF03706">
    <property type="entry name" value="LPG_synthase_TM"/>
    <property type="match status" value="1"/>
</dbReference>
<dbReference type="SUPFAM" id="SSF55729">
    <property type="entry name" value="Acyl-CoA N-acyltransferases (Nat)"/>
    <property type="match status" value="1"/>
</dbReference>
<sequence>MTQELKSKLLSFFKFIFATALFIFVIFTLYRELSHINFKETFIQFGKINRLWLVLLFAGGGLSLILLSLYDIILVKALKLKMPLIRVFRVSYIINALNSIIGFGGFIGAGVRAFVYKNYTNDTKKLVQYISIILVSMLTGLSLLSILVVLRIFNASHMIDEISWVRWILYIVALFLPIFIFYTVARPVDRNNRYMGVYCTVVSCVEWMAAATVLYFAALIVDIHISFMTFVGIFVIAALSGLVSFIPGGFGAFDLVVLLGLKSLGISEEKILLALVLYRFAYYFVPVMIALILSSFEFGNTAKKYLDNSKYFIPVKDFTSFLRSYQKDILAKVPSFSLAILIFLTSIIFFINNLTIVYDGLYDGNHFAYYIALAIQTSACLLLILNVRGIYKGSRRAIIYAFISIILIASATIYTYASFLLLSWLIIIFVLLILAYQRAQVLKRPLRFKKLAFMLLLSIFILYLNHILISGTLYALDVYHIEIDTSLLRYYFWMTIVIIMLLVGVIAWLFDYKYKRPHHSIDLTLCDAIIQKYGGNYLSHLVYSGDKDCFFNENKDSFIMYRYKSNALVVLGDPIGNTKSFESLLEAFYQFAEYQGYEIIFYQISDQYMPLYHNFGNQFFKLGEEAIIDLTTFTTSGKKRRGFRATLNKFDDLNINFEIIEPPFTQDFFDELKFVSDKWLDGRSEMHFSVGQFTQTYLSKAPIGVMRDHSGKMIAFCSLMPTYSNNAISVDLIRWLPELDLPLMDGLYLHMLLWSKEKGYKAFNMGMATLSNVGQLHYSYLRERMAGRVFEHFNGLYRFQGLRRYKEKYSPNWEPRFLVYQKHYSLWESMLKVMRVIRHK</sequence>
<feature type="chain" id="PRO_0000096566" description="Phosphatidylglycerol lysyltransferase">
    <location>
        <begin position="1"/>
        <end position="840"/>
    </location>
</feature>
<feature type="topological domain" description="Cytoplasmic" evidence="2">
    <location>
        <begin position="1"/>
        <end position="8"/>
    </location>
</feature>
<feature type="transmembrane region" description="Helical" evidence="2">
    <location>
        <begin position="9"/>
        <end position="29"/>
    </location>
</feature>
<feature type="topological domain" description="Extracellular" evidence="2">
    <location>
        <begin position="30"/>
        <end position="52"/>
    </location>
</feature>
<feature type="transmembrane region" description="Helical" evidence="2">
    <location>
        <begin position="53"/>
        <end position="73"/>
    </location>
</feature>
<feature type="topological domain" description="Cytoplasmic" evidence="2">
    <location>
        <begin position="74"/>
        <end position="89"/>
    </location>
</feature>
<feature type="transmembrane region" description="Helical" evidence="2">
    <location>
        <begin position="90"/>
        <end position="110"/>
    </location>
</feature>
<feature type="topological domain" description="Extracellular" evidence="2">
    <location>
        <begin position="111"/>
        <end position="129"/>
    </location>
</feature>
<feature type="transmembrane region" description="Helical" evidence="2">
    <location>
        <begin position="130"/>
        <end position="150"/>
    </location>
</feature>
<feature type="topological domain" description="Cytoplasmic" evidence="2">
    <location>
        <begin position="151"/>
        <end position="161"/>
    </location>
</feature>
<feature type="transmembrane region" description="Helical" evidence="2">
    <location>
        <begin position="162"/>
        <end position="182"/>
    </location>
</feature>
<feature type="topological domain" description="Extracellular" evidence="2">
    <location>
        <begin position="183"/>
        <end position="200"/>
    </location>
</feature>
<feature type="transmembrane region" description="Helical" evidence="2">
    <location>
        <begin position="201"/>
        <end position="221"/>
    </location>
</feature>
<feature type="topological domain" description="Cytoplasmic" evidence="2">
    <location>
        <begin position="222"/>
        <end position="229"/>
    </location>
</feature>
<feature type="transmembrane region" description="Helical" evidence="2">
    <location>
        <begin position="230"/>
        <end position="250"/>
    </location>
</feature>
<feature type="topological domain" description="Extracellular" evidence="2">
    <location>
        <begin position="251"/>
        <end position="270"/>
    </location>
</feature>
<feature type="transmembrane region" description="Helical" evidence="2">
    <location>
        <begin position="271"/>
        <end position="291"/>
    </location>
</feature>
<feature type="topological domain" description="Cytoplasmic" evidence="2">
    <location>
        <begin position="292"/>
        <end position="337"/>
    </location>
</feature>
<feature type="transmembrane region" description="Helical" evidence="2">
    <location>
        <begin position="338"/>
        <end position="358"/>
    </location>
</feature>
<feature type="topological domain" description="Extracellular" evidence="2">
    <location>
        <begin position="359"/>
        <end position="366"/>
    </location>
</feature>
<feature type="transmembrane region" description="Helical" evidence="2">
    <location>
        <begin position="367"/>
        <end position="387"/>
    </location>
</feature>
<feature type="topological domain" description="Cytoplasmic" evidence="2">
    <location>
        <begin position="388"/>
        <end position="392"/>
    </location>
</feature>
<feature type="transmembrane region" description="Helical" evidence="2">
    <location>
        <begin position="393"/>
        <end position="413"/>
    </location>
</feature>
<feature type="topological domain" description="Extracellular" evidence="2">
    <location>
        <begin position="414"/>
        <end position="415"/>
    </location>
</feature>
<feature type="transmembrane region" description="Helical" evidence="2">
    <location>
        <begin position="416"/>
        <end position="436"/>
    </location>
</feature>
<feature type="topological domain" description="Cytoplasmic" evidence="2">
    <location>
        <begin position="437"/>
        <end position="450"/>
    </location>
</feature>
<feature type="transmembrane region" description="Helical" evidence="2">
    <location>
        <begin position="451"/>
        <end position="471"/>
    </location>
</feature>
<feature type="topological domain" description="Extracellular" evidence="2">
    <location>
        <begin position="472"/>
        <end position="489"/>
    </location>
</feature>
<feature type="transmembrane region" description="Helical" evidence="2">
    <location>
        <begin position="490"/>
        <end position="510"/>
    </location>
</feature>
<feature type="topological domain" description="Cytoplasmic" evidence="2">
    <location>
        <begin position="511"/>
        <end position="840"/>
    </location>
</feature>
<organism>
    <name type="scientific">Staphylococcus epidermidis (strain ATCC 35984 / DSM 28319 / BCRC 17069 / CCUG 31568 / BM 3577 / RP62A)</name>
    <dbReference type="NCBI Taxonomy" id="176279"/>
    <lineage>
        <taxon>Bacteria</taxon>
        <taxon>Bacillati</taxon>
        <taxon>Bacillota</taxon>
        <taxon>Bacilli</taxon>
        <taxon>Bacillales</taxon>
        <taxon>Staphylococcaceae</taxon>
        <taxon>Staphylococcus</taxon>
    </lineage>
</organism>
<evidence type="ECO:0000250" key="1"/>
<evidence type="ECO:0000255" key="2"/>
<evidence type="ECO:0000305" key="3"/>
<reference key="1">
    <citation type="journal article" date="2005" name="J. Bacteriol.">
        <title>Insights on evolution of virulence and resistance from the complete genome analysis of an early methicillin-resistant Staphylococcus aureus strain and a biofilm-producing methicillin-resistant Staphylococcus epidermidis strain.</title>
        <authorList>
            <person name="Gill S.R."/>
            <person name="Fouts D.E."/>
            <person name="Archer G.L."/>
            <person name="Mongodin E.F."/>
            <person name="DeBoy R.T."/>
            <person name="Ravel J."/>
            <person name="Paulsen I.T."/>
            <person name="Kolonay J.F."/>
            <person name="Brinkac L.M."/>
            <person name="Beanan M.J."/>
            <person name="Dodson R.J."/>
            <person name="Daugherty S.C."/>
            <person name="Madupu R."/>
            <person name="Angiuoli S.V."/>
            <person name="Durkin A.S."/>
            <person name="Haft D.H."/>
            <person name="Vamathevan J.J."/>
            <person name="Khouri H."/>
            <person name="Utterback T.R."/>
            <person name="Lee C."/>
            <person name="Dimitrov G."/>
            <person name="Jiang L."/>
            <person name="Qin H."/>
            <person name="Weidman J."/>
            <person name="Tran K."/>
            <person name="Kang K.H."/>
            <person name="Hance I.R."/>
            <person name="Nelson K.E."/>
            <person name="Fraser C.M."/>
        </authorList>
    </citation>
    <scope>NUCLEOTIDE SEQUENCE [LARGE SCALE GENOMIC DNA]</scope>
    <source>
        <strain>ATCC 35984 / DSM 28319 / BCRC 17069 / CCUG 31568 / BM 3577 / RP62A</strain>
    </source>
</reference>
<name>MPRF_STAEQ</name>
<comment type="function">
    <text evidence="1">Catalyzes the transfer of a lysyl group from L-lysyl-tRNA(Lys) to membrane-bound phosphatidylglycerol (PG), which produces lysylphosphatidylglycerol (LPG), a major component of the bacterial membrane with a positive net charge. LPG synthesis contributes to bacterial virulence as it is involved in the resistance mechanism against cationic antimicrobial peptides (CAMP) produces by the host's immune system (defensins, cathelicidins) and by the competing microorganisms (bacteriocins). In fact, the modification of anionic phosphatidylglycerol with positively charged L-lysine results in repulsion of the peptides (By similarity).</text>
</comment>
<comment type="catalytic activity">
    <reaction>
        <text>L-lysyl-tRNA(Lys) + a 1,2-diacyl-sn-glycero-3-phospho-(1'-sn-glycerol) = a 1,2-diacyl-sn-glycero-3-phospho-1'-(3'-O-L-lysyl)-sn-glycerol + tRNA(Lys)</text>
        <dbReference type="Rhea" id="RHEA:10668"/>
        <dbReference type="Rhea" id="RHEA-COMP:9696"/>
        <dbReference type="Rhea" id="RHEA-COMP:9697"/>
        <dbReference type="ChEBI" id="CHEBI:64716"/>
        <dbReference type="ChEBI" id="CHEBI:75792"/>
        <dbReference type="ChEBI" id="CHEBI:78442"/>
        <dbReference type="ChEBI" id="CHEBI:78529"/>
        <dbReference type="EC" id="2.3.2.3"/>
    </reaction>
</comment>
<comment type="subcellular location">
    <subcellularLocation>
        <location>Cell membrane</location>
        <topology>Multi-pass membrane protein</topology>
    </subcellularLocation>
</comment>
<comment type="similarity">
    <text evidence="3">Belongs to the LPG synthase family.</text>
</comment>
<accession>Q5HPI1</accession>
<gene>
    <name type="primary">mprF</name>
    <name type="ordered locus">SERP0930</name>
</gene>